<proteinExistence type="evidence at protein level"/>
<sequence length="1242" mass="140080">MAPATPKTSKTAHFENGSTSSQKKMKQSSLLSFFSKQVPSGTPSKKVQKPTPATLENTATDKITKNPQGGKTGKLFVDVDEDNDLTIAEETVSTVRSDIMHSQEPQSDTMLNSNTTEPKSTTTDEDLSSSQSRRNHKRRVNYAESDDDDSDTTFTAKRKKGKVVDSESDEDEYLPDKNDGDEDDDIADDKEDIKGELAEDSGDDDDLISLAETTSKKKFSYNTSHSSSPFTRNISRDNSKKKSRPNQAPSRSYNPSHSQPSATSKSSKFNKQNEERYQWLVDERDAQRRPKSDPEYDPRTLYIPSSAWNKFTPFEKQYWEIKSKMWDCIVFFKKGKFFELYEKDALLANALFDLKIAGGGRANMQLAGIPEMSFEYWAAQFIQMGYKVAKVDQRESMLAKEMREGSKGIVKRELQCILTSGTLTDGDMLHSDLATFCLAIREEPGNFYNETQLDSSTIVQKLNTKIFGAAFIDTATGELQMLEFEDDSECTKLDTLMSQVRPMEVVMERNNLSTLANKIVKFNSAPNAIFNEVKAGEEFYDCDKTYAEIISSEYFSTEEDWPEVLKSYYDTGKKVGFSAFGGLLYYLKWLKLDKNLISMKNIKEYDFVKSQHSMVLDGITLQNLEIFSNSFDGSDKGTLFKLFNRAITPMGKRMMKKWLMHPLLRKNDIESRLDSVDSLLQDITLREQLEITFSKLPDLERMLARIHSRTIKVKDFEKVITAFETIIELQDSLKNNDLKGDVSKYISSFPEGLVEAVKSWTNAFERQKAINENIIVPQRGFDIEFDKSMDRIQELEDELMEILMTYRKQFKCSNIQYKDSGKEIYTIEIPISATKNVPSNWVQMAANKTYKRYYSDEVRALARSMAEAKEIHKTLEEDLKNRLCQKFDAHYNTIWMPTIQAISNIDCLLAITRTSEYLGAPSCRPTIVDEVDSKTNTQLNGFLKFKSLRHPCFNLGATTAKDFIPNDIELGKEQPRLGLLTGANAAGKSTILRMACIAVIMAQMGCYVPCESAVLTPIDRIMTRLGANDNIMQGKSTFFVELAETKKILDMATNRSLLVVDELGRGGSSSDGFAIAESVLHHVATHIQSLGFFATHYGTLASSFKHHPQVRPLKMSILVDEATRNVTFLYKMLEGQSEGSFGMHVASMCGISKEIIDNAQIAADNLEHTSRLVKERDLAANNLNGEVVSVPGGLQSDFVRIAYGDGLKNTKLGSGEGVLNYDWNIKRNVLKSLFSIIDDLQS</sequence>
<name>MSH6_YEAST</name>
<organism>
    <name type="scientific">Saccharomyces cerevisiae (strain ATCC 204508 / S288c)</name>
    <name type="common">Baker's yeast</name>
    <dbReference type="NCBI Taxonomy" id="559292"/>
    <lineage>
        <taxon>Eukaryota</taxon>
        <taxon>Fungi</taxon>
        <taxon>Dikarya</taxon>
        <taxon>Ascomycota</taxon>
        <taxon>Saccharomycotina</taxon>
        <taxon>Saccharomycetes</taxon>
        <taxon>Saccharomycetales</taxon>
        <taxon>Saccharomycetaceae</taxon>
        <taxon>Saccharomyces</taxon>
    </lineage>
</organism>
<evidence type="ECO:0000255" key="1"/>
<evidence type="ECO:0000256" key="2">
    <source>
        <dbReference type="SAM" id="MobiDB-lite"/>
    </source>
</evidence>
<evidence type="ECO:0000269" key="3">
    <source>
    </source>
</evidence>
<evidence type="ECO:0000269" key="4">
    <source>
    </source>
</evidence>
<evidence type="ECO:0000269" key="5">
    <source>
    </source>
</evidence>
<evidence type="ECO:0000269" key="6">
    <source>
    </source>
</evidence>
<evidence type="ECO:0000269" key="7">
    <source>
    </source>
</evidence>
<evidence type="ECO:0000269" key="8">
    <source>
    </source>
</evidence>
<evidence type="ECO:0000269" key="9">
    <source>
    </source>
</evidence>
<evidence type="ECO:0000269" key="10">
    <source>
    </source>
</evidence>
<evidence type="ECO:0000269" key="11">
    <source>
    </source>
</evidence>
<evidence type="ECO:0000269" key="12">
    <source>
    </source>
</evidence>
<evidence type="ECO:0000269" key="13">
    <source>
    </source>
</evidence>
<evidence type="ECO:0000269" key="14">
    <source>
    </source>
</evidence>
<evidence type="ECO:0000269" key="15">
    <source>
    </source>
</evidence>
<evidence type="ECO:0000269" key="16">
    <source>
    </source>
</evidence>
<evidence type="ECO:0000269" key="17">
    <source>
    </source>
</evidence>
<evidence type="ECO:0000269" key="18">
    <source>
    </source>
</evidence>
<evidence type="ECO:0000269" key="19">
    <source>
    </source>
</evidence>
<evidence type="ECO:0000269" key="20">
    <source>
    </source>
</evidence>
<evidence type="ECO:0000269" key="21">
    <source>
    </source>
</evidence>
<evidence type="ECO:0000269" key="22">
    <source>
    </source>
</evidence>
<evidence type="ECO:0000269" key="23">
    <source>
    </source>
</evidence>
<evidence type="ECO:0000269" key="24">
    <source>
    </source>
</evidence>
<evidence type="ECO:0000269" key="25">
    <source>
    </source>
</evidence>
<evidence type="ECO:0000269" key="26">
    <source>
    </source>
</evidence>
<evidence type="ECO:0000269" key="27">
    <source>
    </source>
</evidence>
<evidence type="ECO:0000269" key="28">
    <source>
    </source>
</evidence>
<evidence type="ECO:0000269" key="29">
    <source>
    </source>
</evidence>
<evidence type="ECO:0000269" key="30">
    <source>
    </source>
</evidence>
<evidence type="ECO:0000269" key="31">
    <source>
    </source>
</evidence>
<evidence type="ECO:0000269" key="32">
    <source>
    </source>
</evidence>
<evidence type="ECO:0000269" key="33">
    <source>
    </source>
</evidence>
<evidence type="ECO:0000269" key="34">
    <source>
    </source>
</evidence>
<evidence type="ECO:0000269" key="35">
    <source>
    </source>
</evidence>
<evidence type="ECO:0000305" key="36"/>
<evidence type="ECO:0007744" key="37">
    <source>
    </source>
</evidence>
<evidence type="ECO:0007744" key="38">
    <source>
    </source>
</evidence>
<evidence type="ECO:0007744" key="39">
    <source>
    </source>
</evidence>
<reference key="1">
    <citation type="journal article" date="1997" name="Nature">
        <title>The nucleotide sequence of Saccharomyces cerevisiae chromosome IV.</title>
        <authorList>
            <person name="Jacq C."/>
            <person name="Alt-Moerbe J."/>
            <person name="Andre B."/>
            <person name="Arnold W."/>
            <person name="Bahr A."/>
            <person name="Ballesta J.P.G."/>
            <person name="Bargues M."/>
            <person name="Baron L."/>
            <person name="Becker A."/>
            <person name="Biteau N."/>
            <person name="Bloecker H."/>
            <person name="Blugeon C."/>
            <person name="Boskovic J."/>
            <person name="Brandt P."/>
            <person name="Brueckner M."/>
            <person name="Buitrago M.J."/>
            <person name="Coster F."/>
            <person name="Delaveau T."/>
            <person name="del Rey F."/>
            <person name="Dujon B."/>
            <person name="Eide L.G."/>
            <person name="Garcia-Cantalejo J.M."/>
            <person name="Goffeau A."/>
            <person name="Gomez-Peris A."/>
            <person name="Granotier C."/>
            <person name="Hanemann V."/>
            <person name="Hankeln T."/>
            <person name="Hoheisel J.D."/>
            <person name="Jaeger W."/>
            <person name="Jimenez A."/>
            <person name="Jonniaux J.-L."/>
            <person name="Kraemer C."/>
            <person name="Kuester H."/>
            <person name="Laamanen P."/>
            <person name="Legros Y."/>
            <person name="Louis E.J."/>
            <person name="Moeller-Rieker S."/>
            <person name="Monnet A."/>
            <person name="Moro M."/>
            <person name="Mueller-Auer S."/>
            <person name="Nussbaumer B."/>
            <person name="Paricio N."/>
            <person name="Paulin L."/>
            <person name="Perea J."/>
            <person name="Perez-Alonso M."/>
            <person name="Perez-Ortin J.E."/>
            <person name="Pohl T.M."/>
            <person name="Prydz H."/>
            <person name="Purnelle B."/>
            <person name="Rasmussen S.W."/>
            <person name="Remacha M.A."/>
            <person name="Revuelta J.L."/>
            <person name="Rieger M."/>
            <person name="Salom D."/>
            <person name="Saluz H.P."/>
            <person name="Saiz J.E."/>
            <person name="Saren A.-M."/>
            <person name="Schaefer M."/>
            <person name="Scharfe M."/>
            <person name="Schmidt E.R."/>
            <person name="Schneider C."/>
            <person name="Scholler P."/>
            <person name="Schwarz S."/>
            <person name="Soler-Mira A."/>
            <person name="Urrestarazu L.A."/>
            <person name="Verhasselt P."/>
            <person name="Vissers S."/>
            <person name="Voet M."/>
            <person name="Volckaert G."/>
            <person name="Wagner G."/>
            <person name="Wambutt R."/>
            <person name="Wedler E."/>
            <person name="Wedler H."/>
            <person name="Woelfl S."/>
            <person name="Harris D.E."/>
            <person name="Bowman S."/>
            <person name="Brown D."/>
            <person name="Churcher C.M."/>
            <person name="Connor R."/>
            <person name="Dedman K."/>
            <person name="Gentles S."/>
            <person name="Hamlin N."/>
            <person name="Hunt S."/>
            <person name="Jones L."/>
            <person name="McDonald S."/>
            <person name="Murphy L.D."/>
            <person name="Niblett D."/>
            <person name="Odell C."/>
            <person name="Oliver K."/>
            <person name="Rajandream M.A."/>
            <person name="Richards C."/>
            <person name="Shore L."/>
            <person name="Walsh S.V."/>
            <person name="Barrell B.G."/>
            <person name="Dietrich F.S."/>
            <person name="Mulligan J.T."/>
            <person name="Allen E."/>
            <person name="Araujo R."/>
            <person name="Aviles E."/>
            <person name="Berno A."/>
            <person name="Carpenter J."/>
            <person name="Chen E."/>
            <person name="Cherry J.M."/>
            <person name="Chung E."/>
            <person name="Duncan M."/>
            <person name="Hunicke-Smith S."/>
            <person name="Hyman R.W."/>
            <person name="Komp C."/>
            <person name="Lashkari D."/>
            <person name="Lew H."/>
            <person name="Lin D."/>
            <person name="Mosedale D."/>
            <person name="Nakahara K."/>
            <person name="Namath A."/>
            <person name="Oefner P."/>
            <person name="Oh C."/>
            <person name="Petel F.X."/>
            <person name="Roberts D."/>
            <person name="Schramm S."/>
            <person name="Schroeder M."/>
            <person name="Shogren T."/>
            <person name="Shroff N."/>
            <person name="Winant A."/>
            <person name="Yelton M.A."/>
            <person name="Botstein D."/>
            <person name="Davis R.W."/>
            <person name="Johnston M."/>
            <person name="Andrews S."/>
            <person name="Brinkman R."/>
            <person name="Cooper J."/>
            <person name="Ding H."/>
            <person name="Du Z."/>
            <person name="Favello A."/>
            <person name="Fulton L."/>
            <person name="Gattung S."/>
            <person name="Greco T."/>
            <person name="Hallsworth K."/>
            <person name="Hawkins J."/>
            <person name="Hillier L.W."/>
            <person name="Jier M."/>
            <person name="Johnson D."/>
            <person name="Johnston L."/>
            <person name="Kirsten J."/>
            <person name="Kucaba T."/>
            <person name="Langston Y."/>
            <person name="Latreille P."/>
            <person name="Le T."/>
            <person name="Mardis E."/>
            <person name="Menezes S."/>
            <person name="Miller N."/>
            <person name="Nhan M."/>
            <person name="Pauley A."/>
            <person name="Peluso D."/>
            <person name="Rifkin L."/>
            <person name="Riles L."/>
            <person name="Taich A."/>
            <person name="Trevaskis E."/>
            <person name="Vignati D."/>
            <person name="Wilcox L."/>
            <person name="Wohldman P."/>
            <person name="Vaudin M."/>
            <person name="Wilson R."/>
            <person name="Waterston R."/>
            <person name="Albermann K."/>
            <person name="Hani J."/>
            <person name="Heumann K."/>
            <person name="Kleine K."/>
            <person name="Mewes H.-W."/>
            <person name="Zollner A."/>
            <person name="Zaccaria P."/>
        </authorList>
    </citation>
    <scope>NUCLEOTIDE SEQUENCE [LARGE SCALE GENOMIC DNA]</scope>
    <source>
        <strain>ATCC 204508 / S288c</strain>
    </source>
</reference>
<reference key="2">
    <citation type="journal article" date="2014" name="G3 (Bethesda)">
        <title>The reference genome sequence of Saccharomyces cerevisiae: Then and now.</title>
        <authorList>
            <person name="Engel S.R."/>
            <person name="Dietrich F.S."/>
            <person name="Fisk D.G."/>
            <person name="Binkley G."/>
            <person name="Balakrishnan R."/>
            <person name="Costanzo M.C."/>
            <person name="Dwight S.S."/>
            <person name="Hitz B.C."/>
            <person name="Karra K."/>
            <person name="Nash R.S."/>
            <person name="Weng S."/>
            <person name="Wong E.D."/>
            <person name="Lloyd P."/>
            <person name="Skrzypek M.S."/>
            <person name="Miyasato S.R."/>
            <person name="Simison M."/>
            <person name="Cherry J.M."/>
        </authorList>
    </citation>
    <scope>GENOME REANNOTATION</scope>
    <source>
        <strain>ATCC 204508 / S288c</strain>
    </source>
</reference>
<reference key="3">
    <citation type="journal article" date="1996" name="Curr. Biol.">
        <title>MSH6, a Saccharomyces cerevisiae protein that binds to mismatches as a heterodimer with MSH2.</title>
        <authorList>
            <person name="Iaccarino I."/>
            <person name="Palombo F."/>
            <person name="Drummond J.T."/>
            <person name="Totty N.F."/>
            <person name="Hsuan J.J."/>
            <person name="Modrich P."/>
            <person name="Jiricny J."/>
        </authorList>
    </citation>
    <scope>CHARACTERIZATION</scope>
</reference>
<reference key="4">
    <citation type="journal article" date="1996" name="Genes Dev.">
        <title>Redundancy of Saccharomyces cerevisiae MSH3 and MSH6 in MSH2-dependent mismatch repair.</title>
        <authorList>
            <person name="Marsischky G.T."/>
            <person name="Filosi N."/>
            <person name="Kane M.F."/>
            <person name="Kolodner R.D."/>
        </authorList>
    </citation>
    <scope>FUNCTION</scope>
    <scope>INTERACTION WITH MSH2</scope>
    <scope>MUTAGENESIS OF GLY-421</scope>
</reference>
<reference key="5">
    <citation type="journal article" date="1996" name="Mol. Cell. Biol.">
        <title>The Saccharomyces cerevisiae Msh2 and Msh6 proteins form a complex that specifically binds to duplex oligonucleotides containing mismatched DNA base pairs.</title>
        <authorList>
            <person name="Alani E."/>
        </authorList>
    </citation>
    <scope>CHARACTERIZATION</scope>
    <scope>INTERACTION WITH MSH2</scope>
</reference>
<reference key="6">
    <citation type="journal article" date="1997" name="Mol. Cell. Biol.">
        <title>Microsatellite instability in yeast: dependence on repeat unit size and DNA mismatch repair genes.</title>
        <authorList>
            <person name="Sia E.A."/>
            <person name="Kokoska R.J."/>
            <person name="Dominska M."/>
            <person name="Greenwell P."/>
            <person name="Petes T.D."/>
        </authorList>
    </citation>
    <scope>FUNCTION IN MMR</scope>
</reference>
<reference key="7">
    <citation type="journal article" date="1998" name="J. Biol. Chem.">
        <title>ATP-dependent assembly of a ternary complex consisting of a DNA mismatch and the yeast MSH2-MSH6 and MLH1-PMS1 protein complexes.</title>
        <authorList>
            <person name="Habraken Y."/>
            <person name="Sung P."/>
            <person name="Prakash L."/>
            <person name="Prakash S."/>
        </authorList>
    </citation>
    <scope>FUNCTION</scope>
    <scope>DNA-BINDING</scope>
    <scope>COMPLEX FORMATION WITH MLH1-PMS1</scope>
</reference>
<reference key="8">
    <citation type="journal article" date="1998" name="Mol. Cell. Biol.">
        <title>Saccharomyces cerevisiae Msh2p and Msh6p ATPase activities are both required during mismatch repair.</title>
        <authorList>
            <person name="Studamire B."/>
            <person name="Quach T."/>
            <person name="Alani E."/>
        </authorList>
    </citation>
    <scope>MUTAGENESIS OF GLY-987</scope>
</reference>
<reference key="9">
    <citation type="journal article" date="1998" name="Proc. Natl. Acad. Sci. U.S.A.">
        <title>The Saccharomyces cerevisiae MLH3 gene functions in MSH3-dependent suppression of frameshift mutations.</title>
        <authorList>
            <person name="Flores-Rozas H."/>
            <person name="Kolodner R.D."/>
        </authorList>
    </citation>
    <scope>FUNCTION</scope>
</reference>
<reference key="10">
    <citation type="journal article" date="1999" name="Cancer Res.">
        <title>Germ-line msh6 mutations in colorectal cancer families.</title>
        <authorList>
            <person name="Kolodner R.D."/>
            <person name="Tytell J.D."/>
            <person name="Schmeits J.L."/>
            <person name="Kane M.F."/>
            <person name="Das Gupta R."/>
            <person name="Weger J."/>
            <person name="Wahlberg S."/>
            <person name="Fox E.A."/>
            <person name="Peel D."/>
            <person name="Ziogas A."/>
            <person name="Garber J.E."/>
            <person name="Syngal S."/>
            <person name="Anton-Culver H."/>
            <person name="Li F.P."/>
        </authorList>
    </citation>
    <scope>MUTAGENESIS OF LEU-301 AND GLY-477</scope>
</reference>
<reference key="11">
    <citation type="journal article" date="1999" name="J. Biol. Chem.">
        <title>Saccharomyces cerevisiae MSH2/6 complex interacts with Holliday junctions and facilitates their cleavage by phage resolution enzymes.</title>
        <authorList>
            <person name="Marsischky G.T."/>
            <person name="Lee S."/>
            <person name="Griffith J."/>
            <person name="Kolodner R.D."/>
        </authorList>
    </citation>
    <scope>DNA-BINDING SPECIFICITY</scope>
</reference>
<reference key="12">
    <citation type="journal article" date="1999" name="J. Biol. Chem.">
        <title>A mutation in the MSH6 subunit of the Saccharomyces cerevisiae MSH2-MSH6 complex disrupts mismatch recognition.</title>
        <authorList>
            <person name="Bowers J."/>
            <person name="Sokolsky T."/>
            <person name="Quach T."/>
            <person name="Alani E."/>
        </authorList>
    </citation>
    <scope>MUTAGENESIS OF PHE-337</scope>
</reference>
<reference key="13">
    <citation type="journal article" date="1999" name="J. Biol. Chem.">
        <title>Biochemical characterization of the interaction between the Saccharomyces cerevisiae MSH2-MSH6 complex and mispaired bases in DNA.</title>
        <authorList>
            <person name="Marsischky G.T."/>
            <person name="Kolodner R.D."/>
        </authorList>
    </citation>
    <scope>DNA-BINDING SPECIFICITY</scope>
</reference>
<reference key="14">
    <citation type="journal article" date="1999" name="Mol. Cell">
        <title>MSH2 and MSH6 are required for removal of adenine misincorporated opposite 8-oxo-guanine in S. cerevisiae.</title>
        <authorList>
            <person name="Ni T.T."/>
            <person name="Marsischky G.T."/>
            <person name="Kolodner R.D."/>
        </authorList>
    </citation>
    <scope>FUNCTION</scope>
</reference>
<reference key="15">
    <citation type="journal article" date="2000" name="J. Biol. Chem.">
        <title>Functional interaction of proliferating cell nuclear antigen with MSH2-MSH6 and MSH2-MSH3 complexes.</title>
        <authorList>
            <person name="Clark A.B."/>
            <person name="Valle F."/>
            <person name="Drotschmann K."/>
            <person name="Gary R.K."/>
            <person name="Kunkel T.A."/>
        </authorList>
    </citation>
    <scope>INTERACTION WITH POL30</scope>
    <scope>MUTAGENESIS OF 26-LYS-GLN-27 AND 33-PHE-PHE-34</scope>
</reference>
<reference key="16">
    <citation type="journal article" date="2000" name="J. Mol. Biol.">
        <title>Analysis of yeast MSH2-MSH6 suggests that the initiation of mismatch repair can be separated into discrete steps.</title>
        <authorList>
            <person name="Bowers J."/>
            <person name="Tran P.T."/>
            <person name="Liskay R.M."/>
            <person name="Alani E."/>
        </authorList>
    </citation>
    <scope>FUNCTION</scope>
    <scope>MUTAGENESIS OF PHE-337</scope>
</reference>
<reference key="17">
    <citation type="journal article" date="2000" name="Nat. Genet.">
        <title>Novel dominant mutations in Saccharomyces cerevisiae MSH6.</title>
        <authorList>
            <person name="Das Gupta R."/>
            <person name="Kolodner R.D."/>
        </authorList>
    </citation>
    <scope>MUTAGENESIS</scope>
</reference>
<reference key="18">
    <citation type="journal article" date="2000" name="Nat. Genet.">
        <title>Proliferating cell nuclear antigen and Msh2p-Msh6p interact to form an active mispair recognition complex.</title>
        <authorList>
            <person name="Flores-Rozas H."/>
            <person name="Clark D."/>
            <person name="Kolodner R.D."/>
        </authorList>
    </citation>
    <scope>INTERACTION WITH POL30</scope>
    <scope>MUTAGENESIS OF 33-PHE-PHE-34</scope>
</reference>
<reference key="19">
    <citation type="journal article" date="2001" name="J. Biol. Chem.">
        <title>Asymmetric recognition of DNA local distortion. Structure-based functional studies of eukaryotic Msh2-Msh6.</title>
        <authorList>
            <person name="Drotschmann K."/>
            <person name="Yang W."/>
            <person name="Brownewell F.E."/>
            <person name="Kool E.T."/>
            <person name="Kunkel T.A."/>
        </authorList>
    </citation>
    <scope>DNA-BINDING</scope>
    <scope>MUTAGENESIS OF PRO-313; PHE-337; GLU-339; GLY-368; PRO-370; GLN-393; ARG-412; LYS-848 AND ARG-852</scope>
</reference>
<reference key="20">
    <citation type="journal article" date="2001" name="J. Mol. Biol.">
        <title>MSH-MLH complexes formed at a DNA mismatch are disrupted by the PCNA sliding clamp.</title>
        <authorList>
            <person name="Bowers J."/>
            <person name="Tran P.T."/>
            <person name="Joshi A."/>
            <person name="Liskay R.M."/>
            <person name="Alani E."/>
        </authorList>
    </citation>
    <scope>FUNCTION</scope>
    <scope>COMPLEX FORMATION WITH MLH1-PMS1</scope>
</reference>
<reference key="21">
    <citation type="journal article" date="2002" name="DNA Repair">
        <title>Evidence for sequential action of two ATPase active sites in yeast Msh2-Msh6.</title>
        <authorList>
            <person name="Drotschmann K."/>
            <person name="Yang W."/>
            <person name="Kunkel T.A."/>
        </authorList>
    </citation>
    <scope>FUNCTION</scope>
    <scope>MUTAGENESIS OF GLU-1062</scope>
</reference>
<reference key="22">
    <citation type="journal article" date="2002" name="J. Biol. Chem.">
        <title>Dominant Saccharomyces cerevisiae msh6 mutations cause increased mispair binding and decreased dissociation from mispairs by Msh2-Msh6 in the presence of ATP.</title>
        <authorList>
            <person name="Hess M.T."/>
            <person name="Das Gupta R."/>
            <person name="Kolodner R.D."/>
        </authorList>
    </citation>
    <scope>MUTAGENESIS OF SER-1036; GLY-1067; HIS-1096 AND GLY-1142</scope>
</reference>
<reference key="23">
    <citation type="journal article" date="2003" name="Biochemistry">
        <title>Mismatch recognition-coupled stabilization of Msh2-Msh6 in an ATP-bound state at the initiation of DNA repair.</title>
        <authorList>
            <person name="Antony E."/>
            <person name="Hingorani M.M."/>
        </authorList>
    </citation>
    <scope>FUNCTION</scope>
</reference>
<reference key="24">
    <citation type="journal article" date="2003" name="J. Biol. Chem.">
        <title>Transfer of the MSH2.MSH6 complex from proliferating cell nuclear antigen to mispaired bases in DNA.</title>
        <authorList>
            <person name="Lau P.J."/>
            <person name="Kolodner R.D."/>
        </authorList>
    </citation>
    <scope>INTERACTION WITH POL30</scope>
</reference>
<reference key="25">
    <citation type="journal article" date="2003" name="Nature">
        <title>Global analysis of protein localization in budding yeast.</title>
        <authorList>
            <person name="Huh W.-K."/>
            <person name="Falvo J.V."/>
            <person name="Gerke L.C."/>
            <person name="Carroll A.S."/>
            <person name="Howson R.W."/>
            <person name="Weissman J.S."/>
            <person name="O'Shea E.K."/>
        </authorList>
    </citation>
    <scope>SUBCELLULAR LOCATION [LARGE SCALE ANALYSIS]</scope>
</reference>
<reference key="26">
    <citation type="journal article" date="2003" name="Nature">
        <title>Global analysis of protein expression in yeast.</title>
        <authorList>
            <person name="Ghaemmaghami S."/>
            <person name="Huh W.-K."/>
            <person name="Bower K."/>
            <person name="Howson R.W."/>
            <person name="Belle A."/>
            <person name="Dephoure N."/>
            <person name="O'Shea E.K."/>
            <person name="Weissman J.S."/>
        </authorList>
    </citation>
    <scope>LEVEL OF PROTEIN EXPRESSION [LARGE SCALE ANALYSIS]</scope>
</reference>
<reference key="27">
    <citation type="journal article" date="2004" name="J. Biol. Chem.">
        <title>Cadmium inhibits the functions of eukaryotic MutS complexes.</title>
        <authorList>
            <person name="Clark A.B."/>
            <person name="Kunkel T.A."/>
        </authorList>
    </citation>
    <scope>ACTIVITY REGULATION</scope>
    <scope>MUTAGENESIS OF GLU-1062</scope>
</reference>
<reference key="28">
    <citation type="journal article" date="2005" name="J. Biol. Chem.">
        <title>Analysis of the interaction between the Saccharomyces cerevisiae MSH2-MSH6 and MLH1-PMS1 complexes with DNA using a reversible DNA end-blocking system.</title>
        <authorList>
            <person name="Mendillo M.L."/>
            <person name="Mazur D.J."/>
            <person name="Kolodner R.D."/>
        </authorList>
    </citation>
    <scope>FUNCTION</scope>
    <scope>COMPLEX FORMATION WITH MLH1-PMS1</scope>
</reference>
<reference key="29">
    <citation type="journal article" date="2005" name="Mol. Cell">
        <title>Detection of high-affinity and sliding clamp modes for MSH2-MSH6 by single-molecule unzipping force analysis.</title>
        <authorList>
            <person name="Jiang J."/>
            <person name="Bai L."/>
            <person name="Surtees J.A."/>
            <person name="Gemici Z."/>
            <person name="Wang M.D."/>
            <person name="Alani E."/>
        </authorList>
    </citation>
    <scope>FUNCTION</scope>
</reference>
<reference key="30">
    <citation type="journal article" date="2005" name="Nucleic Acids Res.">
        <title>Cadmium inhibits mismatch repair by blocking the ATPase activity of the MSH2-MSH6 complex.</title>
        <authorList>
            <person name="Banerjee S."/>
            <person name="Flores-Rozas H."/>
        </authorList>
    </citation>
    <scope>ACTIVITY REGULATION</scope>
</reference>
<reference key="31">
    <citation type="journal article" date="2006" name="DNA Repair">
        <title>Contribution of Msh2 and Msh6 subunits to the asymmetric ATPase and DNA mismatch binding activities of Saccharomyces cerevisiae Msh2-Msh6 mismatch repair protein.</title>
        <authorList>
            <person name="Antony E."/>
            <person name="Khubchandani S."/>
            <person name="Chen S."/>
            <person name="Hingorani M.M."/>
        </authorList>
    </citation>
    <scope>FUNCTION</scope>
    <scope>MUTAGENESIS OF LYS-988 AND GLU-1062</scope>
</reference>
<reference key="32">
    <citation type="journal article" date="2006" name="Genetics">
        <title>Analysis of the proteins involved in the in vivo repair of base-base mismatches and four-base loops formed during meiotic recombination in the yeast Saccharomyces cerevisiae.</title>
        <authorList>
            <person name="Stone J.E."/>
            <person name="Petes T.D."/>
        </authorList>
    </citation>
    <scope>FUNCTION</scope>
</reference>
<reference key="33">
    <citation type="journal article" date="2006" name="Mol. Cell">
        <title>Inhibition of Msh6 ATPase activity by mispaired DNA induces a Msh2(ATP)-Msh6(ATP) state capable of hydrolysis-independent movement along DNA.</title>
        <authorList>
            <person name="Mazur D.J."/>
            <person name="Mendillo M.L."/>
            <person name="Kolodner R.D."/>
        </authorList>
    </citation>
    <scope>FUNCTION</scope>
    <scope>MUTAGENESIS OF LYS-988</scope>
</reference>
<reference key="34">
    <citation type="journal article" date="2006" name="Proc. Natl. Acad. Sci. U.S.A.">
        <title>Biochemical basis for dominant mutations in the Saccharomyces cerevisiae MSH6 gene.</title>
        <authorList>
            <person name="Hess M.T."/>
            <person name="Mendillo M.L."/>
            <person name="Mazur D.J."/>
            <person name="Kolodner R.D."/>
        </authorList>
    </citation>
    <scope>FUNCTION</scope>
    <scope>MUTAGENESIS OF SER-1036; GLY-1067 AND GLY-1142</scope>
</reference>
<reference key="35">
    <citation type="journal article" date="2007" name="DNA Repair">
        <title>Specialized mismatch repair function of Glu339 in the Phe-X-Glu motif of yeast Msh6.</title>
        <authorList>
            <person name="Holmes S.F."/>
            <person name="Scarpinato K.D."/>
            <person name="McCulloch S.D."/>
            <person name="Schaaper R.M."/>
            <person name="Kunkel T.A."/>
        </authorList>
    </citation>
    <scope>FUNCTION</scope>
    <scope>MUTAGENESIS OF GLU-339</scope>
</reference>
<reference key="36">
    <citation type="journal article" date="2007" name="J. Mol. Biol.">
        <title>Saccharomyces cerevisiae MSH2-MSH3 and MSH2-MSH6 complexes display distinct requirements for DNA binding domain I in mismatch recognition.</title>
        <authorList>
            <person name="Lee S.D."/>
            <person name="Surtees J.A."/>
            <person name="Alani E."/>
        </authorList>
    </citation>
    <scope>FUNCTION</scope>
</reference>
<reference key="37">
    <citation type="journal article" date="2007" name="J. Proteome Res.">
        <title>Large-scale phosphorylation analysis of alpha-factor-arrested Saccharomyces cerevisiae.</title>
        <authorList>
            <person name="Li X."/>
            <person name="Gerber S.A."/>
            <person name="Rudner A.D."/>
            <person name="Beausoleil S.A."/>
            <person name="Haas W."/>
            <person name="Villen J."/>
            <person name="Elias J.E."/>
            <person name="Gygi S.P."/>
        </authorList>
    </citation>
    <scope>PHOSPHORYLATION [LARGE SCALE ANALYSIS] AT SER-145 AND SER-150</scope>
    <scope>IDENTIFICATION BY MASS SPECTROMETRY [LARGE SCALE ANALYSIS]</scope>
    <source>
        <strain>ADR376</strain>
    </source>
</reference>
<reference key="38">
    <citation type="journal article" date="2007" name="Nucleic Acids Res.">
        <title>Multiple functions for the N-terminal region of Msh6.</title>
        <authorList>
            <person name="Clark A.B."/>
            <person name="Deterding L."/>
            <person name="Tomer K.B."/>
            <person name="Kunkel T.A."/>
        </authorList>
    </citation>
    <scope>FUNCTION</scope>
    <scope>DNA-BINDING DOMAIN</scope>
</reference>
<reference key="39">
    <citation type="journal article" date="2007" name="Proc. Natl. Acad. Sci. U.S.A.">
        <title>Chimeric Saccharomyces cerevisiae Msh6 protein with an Msh3 mispair-binding domain combines properties of both proteins.</title>
        <authorList>
            <person name="Shell S.S."/>
            <person name="Putnam C.D."/>
            <person name="Kolodner R.D."/>
        </authorList>
    </citation>
    <scope>FUNCTION</scope>
</reference>
<reference key="40">
    <citation type="journal article" date="2007" name="Proc. Natl. Acad. Sci. U.S.A.">
        <title>Analysis of phosphorylation sites on proteins from Saccharomyces cerevisiae by electron transfer dissociation (ETD) mass spectrometry.</title>
        <authorList>
            <person name="Chi A."/>
            <person name="Huttenhower C."/>
            <person name="Geer L.Y."/>
            <person name="Coon J.J."/>
            <person name="Syka J.E.P."/>
            <person name="Bai D.L."/>
            <person name="Shabanowitz J."/>
            <person name="Burke D.J."/>
            <person name="Troyanskaya O.G."/>
            <person name="Hunt D.F."/>
        </authorList>
    </citation>
    <scope>IDENTIFICATION BY MASS SPECTROMETRY [LARGE SCALE ANALYSIS]</scope>
</reference>
<reference key="41">
    <citation type="journal article" date="2008" name="Mol. Cell. Proteomics">
        <title>A multidimensional chromatography technology for in-depth phosphoproteome analysis.</title>
        <authorList>
            <person name="Albuquerque C.P."/>
            <person name="Smolka M.B."/>
            <person name="Payne S.H."/>
            <person name="Bafna V."/>
            <person name="Eng J."/>
            <person name="Zhou H."/>
        </authorList>
    </citation>
    <scope>PHOSPHORYLATION [LARGE SCALE ANALYSIS] AT SER-102; SER-145; SER-150 AND THR-451</scope>
    <scope>IDENTIFICATION BY MASS SPECTROMETRY [LARGE SCALE ANALYSIS]</scope>
</reference>
<reference key="42">
    <citation type="journal article" date="2009" name="Science">
        <title>Global analysis of Cdk1 substrate phosphorylation sites provides insights into evolution.</title>
        <authorList>
            <person name="Holt L.J."/>
            <person name="Tuch B.B."/>
            <person name="Villen J."/>
            <person name="Johnson A.D."/>
            <person name="Gygi S.P."/>
            <person name="Morgan D.O."/>
        </authorList>
    </citation>
    <scope>PHOSPHORYLATION [LARGE SCALE ANALYSIS] AT SER-145; SER-150 AND SER-201</scope>
    <scope>IDENTIFICATION BY MASS SPECTROMETRY [LARGE SCALE ANALYSIS]</scope>
</reference>
<keyword id="KW-0067">ATP-binding</keyword>
<keyword id="KW-0227">DNA damage</keyword>
<keyword id="KW-0234">DNA repair</keyword>
<keyword id="KW-0238">DNA-binding</keyword>
<keyword id="KW-0547">Nucleotide-binding</keyword>
<keyword id="KW-0539">Nucleus</keyword>
<keyword id="KW-0597">Phosphoprotein</keyword>
<keyword id="KW-1185">Reference proteome</keyword>
<feature type="chain" id="PRO_0000115213" description="DNA mismatch repair protein MSH6">
    <location>
        <begin position="1"/>
        <end position="1242"/>
    </location>
</feature>
<feature type="DNA-binding region">
    <location>
        <begin position="228"/>
        <end position="299"/>
    </location>
</feature>
<feature type="region of interest" description="Disordered" evidence="2">
    <location>
        <begin position="1"/>
        <end position="271"/>
    </location>
</feature>
<feature type="region of interest" description="Mispair-binding domain">
    <location>
        <begin position="305"/>
        <end position="421"/>
    </location>
</feature>
<feature type="short sequence motif" description="PIP box">
    <location>
        <begin position="27"/>
        <end position="34"/>
    </location>
</feature>
<feature type="compositionally biased region" description="Polar residues" evidence="2">
    <location>
        <begin position="1"/>
        <end position="11"/>
    </location>
</feature>
<feature type="compositionally biased region" description="Low complexity" evidence="2">
    <location>
        <begin position="18"/>
        <end position="37"/>
    </location>
</feature>
<feature type="compositionally biased region" description="Polar residues" evidence="2">
    <location>
        <begin position="54"/>
        <end position="69"/>
    </location>
</feature>
<feature type="compositionally biased region" description="Polar residues" evidence="2">
    <location>
        <begin position="103"/>
        <end position="121"/>
    </location>
</feature>
<feature type="compositionally biased region" description="Acidic residues" evidence="2">
    <location>
        <begin position="166"/>
        <end position="190"/>
    </location>
</feature>
<feature type="compositionally biased region" description="Acidic residues" evidence="2">
    <location>
        <begin position="198"/>
        <end position="207"/>
    </location>
</feature>
<feature type="compositionally biased region" description="Polar residues" evidence="2">
    <location>
        <begin position="220"/>
        <end position="233"/>
    </location>
</feature>
<feature type="compositionally biased region" description="Polar residues" evidence="2">
    <location>
        <begin position="245"/>
        <end position="270"/>
    </location>
</feature>
<feature type="binding site" evidence="1">
    <location>
        <begin position="982"/>
        <end position="989"/>
    </location>
    <ligand>
        <name>ATP</name>
        <dbReference type="ChEBI" id="CHEBI:30616"/>
    </ligand>
</feature>
<feature type="modified residue" description="Phosphoserine" evidence="38">
    <location>
        <position position="102"/>
    </location>
</feature>
<feature type="modified residue" description="Phosphoserine" evidence="37 38 39">
    <location>
        <position position="145"/>
    </location>
</feature>
<feature type="modified residue" description="Phosphoserine" evidence="37 38 39">
    <location>
        <position position="150"/>
    </location>
</feature>
<feature type="modified residue" description="Phosphoserine" evidence="39">
    <location>
        <position position="201"/>
    </location>
</feature>
<feature type="modified residue" description="Phosphothreonine" evidence="38">
    <location>
        <position position="451"/>
    </location>
</feature>
<feature type="mutagenesis site" description="Partially functional in a mismatch repair assay; when associated with 33-AA-34." evidence="8">
    <original>KQ</original>
    <variation>AA</variation>
    <location>
        <begin position="26"/>
        <end position="27"/>
    </location>
</feature>
<feature type="mutagenesis site" description="Abolishes interaction with PCNA (POL30), but only causes a moderate mismatch repair defect. Partially functional in a mismatch repair assay; when associated with 26-AA-27." evidence="8 9">
    <original>FF</original>
    <variation>AA</variation>
    <location>
        <begin position="33"/>
        <end position="34"/>
    </location>
</feature>
<feature type="mutagenesis site" description="Fully functional in a mismatch repair assay." evidence="5">
    <original>L</original>
    <variation>V</variation>
    <location>
        <position position="301"/>
    </location>
</feature>
<feature type="mutagenesis site" description="Fully functional in a mismatch repair assay." evidence="11">
    <original>P</original>
    <variation>A</variation>
    <location>
        <position position="313"/>
    </location>
</feature>
<feature type="mutagenesis site" description="Shows defects in both homoduplex and mispair DNA binding and is only partially functional in a mismatch repair assay." evidence="3 7 11">
    <original>F</original>
    <variation>A</variation>
    <location>
        <position position="337"/>
    </location>
</feature>
<feature type="mutagenesis site" description="Partially functional in a mismatch repair assay." evidence="3 7 11">
    <original>F</original>
    <variation>H</variation>
    <variation>I</variation>
    <variation>Y</variation>
    <location>
        <position position="337"/>
    </location>
</feature>
<feature type="mutagenesis site" description="Completely abolishes mismatch repair." evidence="3 7 11">
    <original>F</original>
    <variation>K</variation>
    <location>
        <position position="337"/>
    </location>
</feature>
<feature type="mutagenesis site" description="In MSH6-6; partially functional in a mismatch repair assay." evidence="3 7 11">
    <original>F</original>
    <variation>S</variation>
    <location>
        <position position="337"/>
    </location>
</feature>
<feature type="mutagenesis site" description="Defective in repairing 8-oxo-G-A mismatches." evidence="11 26">
    <original>E</original>
    <variation>A</variation>
    <location>
        <position position="339"/>
    </location>
</feature>
<feature type="mutagenesis site" description="In MSH6-340; shows defects in mispair DNA binding, but not in homoduplex DNA binding." evidence="6">
    <original>LYEK</original>
    <variation>CFAE</variation>
    <location>
        <begin position="340"/>
        <end position="343"/>
    </location>
</feature>
<feature type="mutagenesis site" description="Moderately reduced activity in a mismatch repair assay." evidence="11">
    <original>G</original>
    <variation>A</variation>
    <location>
        <position position="368"/>
    </location>
</feature>
<feature type="mutagenesis site" description="Partially functional in a mismatch repair assay." evidence="11">
    <original>P</original>
    <variation>A</variation>
    <location>
        <position position="370"/>
    </location>
</feature>
<feature type="mutagenesis site" description="Moderately reduced activity in a mismatch repair assay." evidence="11">
    <original>Q</original>
    <variation>A</variation>
    <location>
        <position position="393"/>
    </location>
</feature>
<feature type="mutagenesis site" description="In MSH6-5; partially functional in a mismatch repair assay." evidence="11">
    <original>Q</original>
    <variation>R</variation>
    <location>
        <position position="393"/>
    </location>
</feature>
<feature type="mutagenesis site" description="Completely abolishes mismatch repair." evidence="11">
    <original>R</original>
    <variation>A</variation>
    <location>
        <position position="412"/>
    </location>
</feature>
<feature type="mutagenesis site" description="In MSH6-7; partially functional in a mismatch repair assay." evidence="11">
    <original>R</original>
    <variation>G</variation>
    <location>
        <position position="412"/>
    </location>
</feature>
<feature type="mutagenesis site" description="In PMS3-1; completely abolishes mismatch repair." evidence="30">
    <original>G</original>
    <variation>D</variation>
    <location>
        <position position="421"/>
    </location>
</feature>
<feature type="mutagenesis site" description="Partially functional in a mismatch repair assay." evidence="5">
    <original>G</original>
    <variation>R</variation>
    <location>
        <position position="477"/>
    </location>
</feature>
<feature type="mutagenesis site" description="Fully functional in a mismatch repair assay." evidence="11">
    <original>K</original>
    <variation>A</variation>
    <location>
        <position position="848"/>
    </location>
</feature>
<feature type="mutagenesis site" description="Moderately reduced activity in a mismatch repair assay." evidence="11">
    <original>R</original>
    <variation>A</variation>
    <location>
        <position position="852"/>
    </location>
</feature>
<feature type="mutagenesis site" description="Has no defect in mismatch DNA binding, but lacks ATP-induced conformational change." evidence="35">
    <original>G</original>
    <variation>D</variation>
    <location>
        <position position="987"/>
    </location>
</feature>
<feature type="mutagenesis site" description="Impairs ATP binding; reduces catalytic activity 13-fold for ATP hydrolysis." evidence="21 24">
    <original>K</original>
    <variation>A</variation>
    <location>
        <position position="988"/>
    </location>
</feature>
<feature type="mutagenesis site" description="In MSH6-4; defective for ATP-induced sliding clamp formation and assembly of ternary complexes with MutL alpha." evidence="12 23">
    <original>S</original>
    <variation>P</variation>
    <location>
        <position position="1036"/>
    </location>
</feature>
<feature type="mutagenesis site" description="Reduces catalytic activity 13-fold for ATP hydrolysis." evidence="14 18 21">
    <original>E</original>
    <variation>A</variation>
    <location>
        <position position="1062"/>
    </location>
</feature>
<feature type="mutagenesis site" description="In MSH6-3; defective for ATP-induced sliding clamp formation and assembly of ternary complexes with MutL alpha." evidence="12 23">
    <original>G</original>
    <variation>D</variation>
    <location>
        <position position="1067"/>
    </location>
</feature>
<feature type="mutagenesis site" description="In MSH6-9; shows normal mispair binding and dissociation, but fails to show complete mispair activation of the ATPase." evidence="12">
    <original>H</original>
    <variation>A</variation>
    <location>
        <position position="1096"/>
    </location>
</feature>
<feature type="mutagenesis site" description="In MSH6-2; defective for ATP-induced sliding clamp formation, but assembles ternary complexes with MutL alpha." evidence="12 23">
    <original>G</original>
    <variation>D</variation>
    <location>
        <position position="1142"/>
    </location>
</feature>
<comment type="function">
    <text evidence="4 7 10 14 15 20 21 22 23 24 25 26 27 28 29 30 32 33 34">Component of the post-replicative DNA mismatch repair system (MMR). Heterodimerizes with MSH2 to form MutS alpha, which binds to DNA mismatches thereby initiating DNA repair. MSH6 provides substrate-binding and substrate specificity to the complex. When bound, MutS alpha bends the DNA helix and shields approximately 20 base pairs. Acts mainly to repair base-base and single insertion-deletion mismatches that occur during replication, but can also repair longer insertion-deletion loops (IDLs), although with decreasing efficiency as the size of the extrahelical loop increases. After mismatch binding, forms a ternary complex with the MutL alpha heterodimer, which is thought to be responsible for directing the downstream MMR events, including strand discrimination, excision, and resynthesis. ATP binding and hydrolysis by the MutS alpha complex is crucial for MMR. Both subunits bind ATP, but with differing affinities, and their ATPase kinetics are also very different. MSH6 binds and hydrolyzes ATP rapidly, whereas MSH2 catalyzes ATP at a substantially slower rate. Binding to a mismatched base pair suppresses MSH6-catalyzed ATP hydrolysis, but not the activity of MSH2. ATP binding to both subunits is necessary to trigger a change in MutS alpha interaction with mismatched DNA, converting MutS alpha into a sliding clamp capable of hydrolysis-independent movement along DNA, and also facilitates formation of ternary complexes containing MutS and MutL proteins and the mismatch. May also be involved in resolution of recombination intermediates.</text>
</comment>
<comment type="activity regulation">
    <text evidence="18 19">Inhibited by Cd(2+).</text>
</comment>
<comment type="subunit">
    <text evidence="8 9 13 30 31">Heterodimer consisting of MSH2-MSH6 (MutS alpha). Forms a ternary complex with MutL alpha (MLH1-PMS1). MutS alpha interacts with proliferating cell nuclear antigen (PCNA/POL30). This interaction is disrupted upon binding of MutS alpha to mismatch DNA.</text>
</comment>
<comment type="interaction">
    <interactant intactId="EBI-11383">
        <id>Q03834</id>
    </interactant>
    <interactant intactId="EBI-11352">
        <id>P25847</id>
        <label>MSH2</label>
    </interactant>
    <organismsDiffer>false</organismsDiffer>
    <experiments>7</experiments>
</comment>
<comment type="interaction">
    <interactant intactId="EBI-11383">
        <id>Q03834</id>
    </interactant>
    <interactant intactId="EBI-12993">
        <id>P15873</id>
        <label>POL30</label>
    </interactant>
    <organismsDiffer>false</organismsDiffer>
    <experiments>5</experiments>
</comment>
<comment type="subcellular location">
    <subcellularLocation>
        <location evidence="16">Nucleus</location>
    </subcellularLocation>
</comment>
<comment type="domain">
    <text>The PIP box serves as a PCNA(POL30)-recognition and -binding motif.</text>
</comment>
<comment type="miscellaneous">
    <text evidence="17">Present with 5330 molecules/cell in log phase SD medium.</text>
</comment>
<comment type="similarity">
    <text evidence="36">Belongs to the DNA mismatch repair MutS family.</text>
</comment>
<protein>
    <recommendedName>
        <fullName>DNA mismatch repair protein MSH6</fullName>
    </recommendedName>
    <alternativeName>
        <fullName>MutS protein homolog 6</fullName>
    </alternativeName>
    <alternativeName>
        <fullName>Postmeiotic segregation protein 3</fullName>
    </alternativeName>
</protein>
<dbReference type="EMBL" id="Z47746">
    <property type="protein sequence ID" value="CAA87671.1"/>
    <property type="molecule type" value="Genomic_DNA"/>
</dbReference>
<dbReference type="EMBL" id="BK006938">
    <property type="protein sequence ID" value="DAA11942.1"/>
    <property type="molecule type" value="Genomic_DNA"/>
</dbReference>
<dbReference type="PIR" id="S51246">
    <property type="entry name" value="S51246"/>
</dbReference>
<dbReference type="RefSeq" id="NP_010382.3">
    <property type="nucleotide sequence ID" value="NM_001180405.3"/>
</dbReference>
<dbReference type="SMR" id="Q03834"/>
<dbReference type="BioGRID" id="32152">
    <property type="interactions" value="133"/>
</dbReference>
<dbReference type="ComplexPortal" id="CPX-1037">
    <property type="entry name" value="DNA mismatch repair MutSalpha complex"/>
</dbReference>
<dbReference type="DIP" id="DIP-2423N"/>
<dbReference type="ELM" id="Q03834"/>
<dbReference type="FunCoup" id="Q03834">
    <property type="interactions" value="1137"/>
</dbReference>
<dbReference type="IntAct" id="Q03834">
    <property type="interactions" value="38"/>
</dbReference>
<dbReference type="MINT" id="Q03834"/>
<dbReference type="STRING" id="4932.YDR097C"/>
<dbReference type="GlyGen" id="Q03834">
    <property type="glycosylation" value="1 site"/>
</dbReference>
<dbReference type="iPTMnet" id="Q03834"/>
<dbReference type="PaxDb" id="4932-YDR097C"/>
<dbReference type="PeptideAtlas" id="Q03834"/>
<dbReference type="EnsemblFungi" id="YDR097C_mRNA">
    <property type="protein sequence ID" value="YDR097C"/>
    <property type="gene ID" value="YDR097C"/>
</dbReference>
<dbReference type="GeneID" id="851671"/>
<dbReference type="KEGG" id="sce:YDR097C"/>
<dbReference type="AGR" id="SGD:S000002504"/>
<dbReference type="SGD" id="S000002504">
    <property type="gene designation" value="MSH6"/>
</dbReference>
<dbReference type="VEuPathDB" id="FungiDB:YDR097C"/>
<dbReference type="eggNOG" id="KOG0217">
    <property type="taxonomic scope" value="Eukaryota"/>
</dbReference>
<dbReference type="GeneTree" id="ENSGT00550000075024"/>
<dbReference type="HOGENOM" id="CLU_002472_1_0_1"/>
<dbReference type="InParanoid" id="Q03834"/>
<dbReference type="OMA" id="TPMMAQY"/>
<dbReference type="OrthoDB" id="10252754at2759"/>
<dbReference type="BioCyc" id="YEAST:G3O-29700-MONOMER"/>
<dbReference type="Reactome" id="R-SCE-5358565">
    <property type="pathway name" value="Mismatch repair (MMR) directed by MSH2:MSH6 (MutSalpha)"/>
</dbReference>
<dbReference type="BioGRID-ORCS" id="851671">
    <property type="hits" value="3 hits in 10 CRISPR screens"/>
</dbReference>
<dbReference type="PRO" id="PR:Q03834"/>
<dbReference type="Proteomes" id="UP000002311">
    <property type="component" value="Chromosome IV"/>
</dbReference>
<dbReference type="RNAct" id="Q03834">
    <property type="molecule type" value="protein"/>
</dbReference>
<dbReference type="GO" id="GO:0005737">
    <property type="term" value="C:cytoplasm"/>
    <property type="evidence" value="ECO:0007005"/>
    <property type="project" value="SGD"/>
</dbReference>
<dbReference type="GO" id="GO:0032301">
    <property type="term" value="C:MutSalpha complex"/>
    <property type="evidence" value="ECO:0000353"/>
    <property type="project" value="ComplexPortal"/>
</dbReference>
<dbReference type="GO" id="GO:0005634">
    <property type="term" value="C:nucleus"/>
    <property type="evidence" value="ECO:0007005"/>
    <property type="project" value="SGD"/>
</dbReference>
<dbReference type="GO" id="GO:0005524">
    <property type="term" value="F:ATP binding"/>
    <property type="evidence" value="ECO:0000314"/>
    <property type="project" value="SGD"/>
</dbReference>
<dbReference type="GO" id="GO:0016887">
    <property type="term" value="F:ATP hydrolysis activity"/>
    <property type="evidence" value="ECO:0000314"/>
    <property type="project" value="SGD"/>
</dbReference>
<dbReference type="GO" id="GO:0140664">
    <property type="term" value="F:ATP-dependent DNA damage sensor activity"/>
    <property type="evidence" value="ECO:0007669"/>
    <property type="project" value="InterPro"/>
</dbReference>
<dbReference type="GO" id="GO:0000400">
    <property type="term" value="F:four-way junction DNA binding"/>
    <property type="evidence" value="ECO:0000314"/>
    <property type="project" value="SGD"/>
</dbReference>
<dbReference type="GO" id="GO:0030983">
    <property type="term" value="F:mismatched DNA binding"/>
    <property type="evidence" value="ECO:0000318"/>
    <property type="project" value="GO_Central"/>
</dbReference>
<dbReference type="GO" id="GO:0003676">
    <property type="term" value="F:nucleic acid binding"/>
    <property type="evidence" value="ECO:0000269"/>
    <property type="project" value="DisProt"/>
</dbReference>
<dbReference type="GO" id="GO:0036297">
    <property type="term" value="P:interstrand cross-link repair"/>
    <property type="evidence" value="ECO:0000316"/>
    <property type="project" value="SGD"/>
</dbReference>
<dbReference type="GO" id="GO:0000710">
    <property type="term" value="P:meiotic mismatch repair"/>
    <property type="evidence" value="ECO:0000315"/>
    <property type="project" value="SGD"/>
</dbReference>
<dbReference type="GO" id="GO:0006298">
    <property type="term" value="P:mismatch repair"/>
    <property type="evidence" value="ECO:0000314"/>
    <property type="project" value="SGD"/>
</dbReference>
<dbReference type="GO" id="GO:0043111">
    <property type="term" value="P:replication fork arrest"/>
    <property type="evidence" value="ECO:0000315"/>
    <property type="project" value="SGD"/>
</dbReference>
<dbReference type="DisProt" id="DP01623"/>
<dbReference type="FunFam" id="1.10.1420.10:FF:000019">
    <property type="entry name" value="DNA mismatch repair protein"/>
    <property type="match status" value="1"/>
</dbReference>
<dbReference type="FunFam" id="3.30.420.110:FF:000006">
    <property type="entry name" value="DNA mismatch repair protein"/>
    <property type="match status" value="1"/>
</dbReference>
<dbReference type="FunFam" id="3.40.1170.10:FF:000002">
    <property type="entry name" value="DNA mismatch repair protein"/>
    <property type="match status" value="1"/>
</dbReference>
<dbReference type="FunFam" id="3.40.50.300:FF:000771">
    <property type="entry name" value="DNA mismatch repair protein"/>
    <property type="match status" value="1"/>
</dbReference>
<dbReference type="Gene3D" id="1.10.1420.10">
    <property type="match status" value="2"/>
</dbReference>
<dbReference type="Gene3D" id="3.40.1170.10">
    <property type="entry name" value="DNA repair protein MutS, domain I"/>
    <property type="match status" value="1"/>
</dbReference>
<dbReference type="Gene3D" id="3.30.420.110">
    <property type="entry name" value="MutS, connector domain"/>
    <property type="match status" value="1"/>
</dbReference>
<dbReference type="Gene3D" id="3.40.50.300">
    <property type="entry name" value="P-loop containing nucleotide triphosphate hydrolases"/>
    <property type="match status" value="1"/>
</dbReference>
<dbReference type="InterPro" id="IPR007695">
    <property type="entry name" value="DNA_mismatch_repair_MutS-lik_N"/>
</dbReference>
<dbReference type="InterPro" id="IPR017261">
    <property type="entry name" value="DNA_mismatch_repair_MutS/MSH"/>
</dbReference>
<dbReference type="InterPro" id="IPR000432">
    <property type="entry name" value="DNA_mismatch_repair_MutS_C"/>
</dbReference>
<dbReference type="InterPro" id="IPR007861">
    <property type="entry name" value="DNA_mismatch_repair_MutS_clamp"/>
</dbReference>
<dbReference type="InterPro" id="IPR007696">
    <property type="entry name" value="DNA_mismatch_repair_MutS_core"/>
</dbReference>
<dbReference type="InterPro" id="IPR016151">
    <property type="entry name" value="DNA_mismatch_repair_MutS_N"/>
</dbReference>
<dbReference type="InterPro" id="IPR036187">
    <property type="entry name" value="DNA_mismatch_repair_MutS_sf"/>
</dbReference>
<dbReference type="InterPro" id="IPR007860">
    <property type="entry name" value="DNA_mmatch_repair_MutS_con_dom"/>
</dbReference>
<dbReference type="InterPro" id="IPR045076">
    <property type="entry name" value="MutS"/>
</dbReference>
<dbReference type="InterPro" id="IPR036678">
    <property type="entry name" value="MutS_con_dom_sf"/>
</dbReference>
<dbReference type="InterPro" id="IPR027417">
    <property type="entry name" value="P-loop_NTPase"/>
</dbReference>
<dbReference type="NCBIfam" id="NF003810">
    <property type="entry name" value="PRK05399.1"/>
    <property type="match status" value="1"/>
</dbReference>
<dbReference type="PANTHER" id="PTHR11361:SF148">
    <property type="entry name" value="DNA MISMATCH REPAIR PROTEIN MSH6"/>
    <property type="match status" value="1"/>
</dbReference>
<dbReference type="PANTHER" id="PTHR11361">
    <property type="entry name" value="DNA MISMATCH REPAIR PROTEIN MUTS FAMILY MEMBER"/>
    <property type="match status" value="1"/>
</dbReference>
<dbReference type="Pfam" id="PF01624">
    <property type="entry name" value="MutS_I"/>
    <property type="match status" value="1"/>
</dbReference>
<dbReference type="Pfam" id="PF05188">
    <property type="entry name" value="MutS_II"/>
    <property type="match status" value="1"/>
</dbReference>
<dbReference type="Pfam" id="PF05192">
    <property type="entry name" value="MutS_III"/>
    <property type="match status" value="1"/>
</dbReference>
<dbReference type="Pfam" id="PF05190">
    <property type="entry name" value="MutS_IV"/>
    <property type="match status" value="1"/>
</dbReference>
<dbReference type="Pfam" id="PF00488">
    <property type="entry name" value="MutS_V"/>
    <property type="match status" value="1"/>
</dbReference>
<dbReference type="PIRSF" id="PIRSF037677">
    <property type="entry name" value="DNA_mis_repair_Msh6"/>
    <property type="match status" value="1"/>
</dbReference>
<dbReference type="SMART" id="SM00534">
    <property type="entry name" value="MUTSac"/>
    <property type="match status" value="1"/>
</dbReference>
<dbReference type="SMART" id="SM00533">
    <property type="entry name" value="MUTSd"/>
    <property type="match status" value="1"/>
</dbReference>
<dbReference type="SUPFAM" id="SSF55271">
    <property type="entry name" value="DNA repair protein MutS, domain I"/>
    <property type="match status" value="1"/>
</dbReference>
<dbReference type="SUPFAM" id="SSF53150">
    <property type="entry name" value="DNA repair protein MutS, domain II"/>
    <property type="match status" value="1"/>
</dbReference>
<dbReference type="SUPFAM" id="SSF48334">
    <property type="entry name" value="DNA repair protein MutS, domain III"/>
    <property type="match status" value="1"/>
</dbReference>
<dbReference type="SUPFAM" id="SSF52540">
    <property type="entry name" value="P-loop containing nucleoside triphosphate hydrolases"/>
    <property type="match status" value="1"/>
</dbReference>
<dbReference type="PROSITE" id="PS00486">
    <property type="entry name" value="DNA_MISMATCH_REPAIR_2"/>
    <property type="match status" value="1"/>
</dbReference>
<accession>Q03834</accession>
<accession>D6VS82</accession>
<gene>
    <name type="primary">MSH6</name>
    <name type="synonym">PMS3</name>
    <name type="ordered locus">YDR097C</name>
    <name type="ORF">YD8557.04C</name>
</gene>